<reference key="1">
    <citation type="journal article" date="2009" name="Stand. Genomic Sci.">
        <title>Complete genome sequence of Beutenbergia cavernae type strain (HKI 0122).</title>
        <authorList>
            <person name="Land M."/>
            <person name="Pukall R."/>
            <person name="Abt B."/>
            <person name="Goker M."/>
            <person name="Rohde M."/>
            <person name="Glavina Del Rio T."/>
            <person name="Tice H."/>
            <person name="Copeland A."/>
            <person name="Cheng J.F."/>
            <person name="Lucas S."/>
            <person name="Chen F."/>
            <person name="Nolan M."/>
            <person name="Bruce D."/>
            <person name="Goodwin L."/>
            <person name="Pitluck S."/>
            <person name="Ivanova N."/>
            <person name="Mavromatis K."/>
            <person name="Ovchinnikova G."/>
            <person name="Pati A."/>
            <person name="Chen A."/>
            <person name="Palaniappan K."/>
            <person name="Hauser L."/>
            <person name="Chang Y.J."/>
            <person name="Jefferies C.C."/>
            <person name="Saunders E."/>
            <person name="Brettin T."/>
            <person name="Detter J.C."/>
            <person name="Han C."/>
            <person name="Chain P."/>
            <person name="Bristow J."/>
            <person name="Eisen J.A."/>
            <person name="Markowitz V."/>
            <person name="Hugenholtz P."/>
            <person name="Kyrpides N.C."/>
            <person name="Klenk H.P."/>
            <person name="Lapidus A."/>
        </authorList>
    </citation>
    <scope>NUCLEOTIDE SEQUENCE [LARGE SCALE GENOMIC DNA]</scope>
    <source>
        <strain>ATCC BAA-8 / DSM 12333 / CCUG 43141 / JCM 11478 / NBRC 16432 / NCIMB 13614 / HKI 0122</strain>
    </source>
</reference>
<protein>
    <recommendedName>
        <fullName evidence="1">DNA-directed RNA polymerase subunit omega</fullName>
        <shortName evidence="1">RNAP omega subunit</shortName>
        <ecNumber evidence="1">2.7.7.6</ecNumber>
    </recommendedName>
    <alternativeName>
        <fullName evidence="1">RNA polymerase omega subunit</fullName>
    </alternativeName>
    <alternativeName>
        <fullName evidence="1">Transcriptase subunit omega</fullName>
    </alternativeName>
</protein>
<accession>C5C692</accession>
<proteinExistence type="inferred from homology"/>
<sequence length="90" mass="9812">MSGTVAAPEGITDPPIDELLTAADSKYALVIYAAKRARQINAYYAQLNEGLLEYVGPLVETRNQEKPLSIAMREINKGLLTVEATESTED</sequence>
<feature type="chain" id="PRO_1000205509" description="DNA-directed RNA polymerase subunit omega">
    <location>
        <begin position="1"/>
        <end position="90"/>
    </location>
</feature>
<evidence type="ECO:0000255" key="1">
    <source>
        <dbReference type="HAMAP-Rule" id="MF_00366"/>
    </source>
</evidence>
<name>RPOZ_BEUC1</name>
<dbReference type="EC" id="2.7.7.6" evidence="1"/>
<dbReference type="EMBL" id="CP001618">
    <property type="protein sequence ID" value="ACQ80298.1"/>
    <property type="molecule type" value="Genomic_DNA"/>
</dbReference>
<dbReference type="RefSeq" id="WP_015882538.1">
    <property type="nucleotide sequence ID" value="NC_012669.1"/>
</dbReference>
<dbReference type="SMR" id="C5C692"/>
<dbReference type="STRING" id="471853.Bcav_2043"/>
<dbReference type="KEGG" id="bcv:Bcav_2043"/>
<dbReference type="eggNOG" id="COG1758">
    <property type="taxonomic scope" value="Bacteria"/>
</dbReference>
<dbReference type="HOGENOM" id="CLU_125406_1_1_11"/>
<dbReference type="OrthoDB" id="8481372at2"/>
<dbReference type="Proteomes" id="UP000007962">
    <property type="component" value="Chromosome"/>
</dbReference>
<dbReference type="GO" id="GO:0000428">
    <property type="term" value="C:DNA-directed RNA polymerase complex"/>
    <property type="evidence" value="ECO:0007669"/>
    <property type="project" value="UniProtKB-KW"/>
</dbReference>
<dbReference type="GO" id="GO:0003677">
    <property type="term" value="F:DNA binding"/>
    <property type="evidence" value="ECO:0007669"/>
    <property type="project" value="UniProtKB-UniRule"/>
</dbReference>
<dbReference type="GO" id="GO:0003899">
    <property type="term" value="F:DNA-directed RNA polymerase activity"/>
    <property type="evidence" value="ECO:0007669"/>
    <property type="project" value="UniProtKB-UniRule"/>
</dbReference>
<dbReference type="GO" id="GO:0006351">
    <property type="term" value="P:DNA-templated transcription"/>
    <property type="evidence" value="ECO:0007669"/>
    <property type="project" value="UniProtKB-UniRule"/>
</dbReference>
<dbReference type="Gene3D" id="3.90.940.10">
    <property type="match status" value="1"/>
</dbReference>
<dbReference type="HAMAP" id="MF_00366">
    <property type="entry name" value="RNApol_bact_RpoZ"/>
    <property type="match status" value="1"/>
</dbReference>
<dbReference type="InterPro" id="IPR003716">
    <property type="entry name" value="DNA-dir_RNA_pol_omega"/>
</dbReference>
<dbReference type="InterPro" id="IPR006110">
    <property type="entry name" value="Pol_omega/Rpo6/RPB6"/>
</dbReference>
<dbReference type="InterPro" id="IPR036161">
    <property type="entry name" value="RPB6/omega-like_sf"/>
</dbReference>
<dbReference type="NCBIfam" id="TIGR00690">
    <property type="entry name" value="rpoZ"/>
    <property type="match status" value="1"/>
</dbReference>
<dbReference type="PANTHER" id="PTHR34476">
    <property type="entry name" value="DNA-DIRECTED RNA POLYMERASE SUBUNIT OMEGA"/>
    <property type="match status" value="1"/>
</dbReference>
<dbReference type="PANTHER" id="PTHR34476:SF1">
    <property type="entry name" value="DNA-DIRECTED RNA POLYMERASE SUBUNIT OMEGA"/>
    <property type="match status" value="1"/>
</dbReference>
<dbReference type="Pfam" id="PF01192">
    <property type="entry name" value="RNA_pol_Rpb6"/>
    <property type="match status" value="1"/>
</dbReference>
<dbReference type="SMART" id="SM01409">
    <property type="entry name" value="RNA_pol_Rpb6"/>
    <property type="match status" value="1"/>
</dbReference>
<dbReference type="SUPFAM" id="SSF63562">
    <property type="entry name" value="RPB6/omega subunit-like"/>
    <property type="match status" value="1"/>
</dbReference>
<comment type="function">
    <text evidence="1">Promotes RNA polymerase assembly. Latches the N- and C-terminal regions of the beta' subunit thereby facilitating its interaction with the beta and alpha subunits.</text>
</comment>
<comment type="catalytic activity">
    <reaction evidence="1">
        <text>RNA(n) + a ribonucleoside 5'-triphosphate = RNA(n+1) + diphosphate</text>
        <dbReference type="Rhea" id="RHEA:21248"/>
        <dbReference type="Rhea" id="RHEA-COMP:14527"/>
        <dbReference type="Rhea" id="RHEA-COMP:17342"/>
        <dbReference type="ChEBI" id="CHEBI:33019"/>
        <dbReference type="ChEBI" id="CHEBI:61557"/>
        <dbReference type="ChEBI" id="CHEBI:140395"/>
        <dbReference type="EC" id="2.7.7.6"/>
    </reaction>
</comment>
<comment type="subunit">
    <text evidence="1">The RNAP catalytic core consists of 2 alpha, 1 beta, 1 beta' and 1 omega subunit. When a sigma factor is associated with the core the holoenzyme is formed, which can initiate transcription.</text>
</comment>
<comment type="similarity">
    <text evidence="1">Belongs to the RNA polymerase subunit omega family.</text>
</comment>
<organism>
    <name type="scientific">Beutenbergia cavernae (strain ATCC BAA-8 / DSM 12333 / CCUG 43141 / JCM 11478 / NBRC 16432 / NCIMB 13614 / HKI 0122)</name>
    <dbReference type="NCBI Taxonomy" id="471853"/>
    <lineage>
        <taxon>Bacteria</taxon>
        <taxon>Bacillati</taxon>
        <taxon>Actinomycetota</taxon>
        <taxon>Actinomycetes</taxon>
        <taxon>Micrococcales</taxon>
        <taxon>Beutenbergiaceae</taxon>
        <taxon>Beutenbergia</taxon>
    </lineage>
</organism>
<gene>
    <name evidence="1" type="primary">rpoZ</name>
    <name type="ordered locus">Bcav_2043</name>
</gene>
<keyword id="KW-0240">DNA-directed RNA polymerase</keyword>
<keyword id="KW-0548">Nucleotidyltransferase</keyword>
<keyword id="KW-1185">Reference proteome</keyword>
<keyword id="KW-0804">Transcription</keyword>
<keyword id="KW-0808">Transferase</keyword>